<reference key="1">
    <citation type="submission" date="2007-12" db="EMBL/GenBank/DDBJ databases">
        <title>Complete sequence of Methylobacterium extorquens PA1.</title>
        <authorList>
            <consortium name="US DOE Joint Genome Institute"/>
            <person name="Copeland A."/>
            <person name="Lucas S."/>
            <person name="Lapidus A."/>
            <person name="Barry K."/>
            <person name="Glavina del Rio T."/>
            <person name="Dalin E."/>
            <person name="Tice H."/>
            <person name="Pitluck S."/>
            <person name="Saunders E."/>
            <person name="Brettin T."/>
            <person name="Bruce D."/>
            <person name="Detter J.C."/>
            <person name="Han C."/>
            <person name="Schmutz J."/>
            <person name="Larimer F."/>
            <person name="Land M."/>
            <person name="Hauser L."/>
            <person name="Kyrpides N."/>
            <person name="Kim E."/>
            <person name="Marx C."/>
            <person name="Richardson P."/>
        </authorList>
    </citation>
    <scope>NUCLEOTIDE SEQUENCE [LARGE SCALE GENOMIC DNA]</scope>
    <source>
        <strain>PA1</strain>
    </source>
</reference>
<accession>A9W8W7</accession>
<organism>
    <name type="scientific">Methylorubrum extorquens (strain PA1)</name>
    <name type="common">Methylobacterium extorquens</name>
    <dbReference type="NCBI Taxonomy" id="419610"/>
    <lineage>
        <taxon>Bacteria</taxon>
        <taxon>Pseudomonadati</taxon>
        <taxon>Pseudomonadota</taxon>
        <taxon>Alphaproteobacteria</taxon>
        <taxon>Hyphomicrobiales</taxon>
        <taxon>Methylobacteriaceae</taxon>
        <taxon>Methylorubrum</taxon>
    </lineage>
</organism>
<keyword id="KW-0067">ATP-binding</keyword>
<keyword id="KW-0963">Cytoplasm</keyword>
<keyword id="KW-1015">Disulfide bond</keyword>
<keyword id="KW-0547">Nucleotide-binding</keyword>
<keyword id="KW-0694">RNA-binding</keyword>
<keyword id="KW-0808">Transferase</keyword>
<keyword id="KW-0819">tRNA processing</keyword>
<keyword id="KW-0820">tRNA-binding</keyword>
<gene>
    <name evidence="1" type="primary">mnmA</name>
    <name type="ordered locus">Mext_4096</name>
</gene>
<dbReference type="EC" id="2.8.1.13" evidence="1"/>
<dbReference type="EMBL" id="CP000908">
    <property type="protein sequence ID" value="ABY32466.1"/>
    <property type="status" value="ALT_INIT"/>
    <property type="molecule type" value="Genomic_DNA"/>
</dbReference>
<dbReference type="RefSeq" id="WP_042509257.1">
    <property type="nucleotide sequence ID" value="NC_010172.1"/>
</dbReference>
<dbReference type="SMR" id="A9W8W7"/>
<dbReference type="KEGG" id="mex:Mext_4096"/>
<dbReference type="eggNOG" id="COG0482">
    <property type="taxonomic scope" value="Bacteria"/>
</dbReference>
<dbReference type="HOGENOM" id="CLU_035188_0_1_5"/>
<dbReference type="BioCyc" id="MEXT419610:MEXT_RS20575-MONOMER"/>
<dbReference type="GO" id="GO:0005737">
    <property type="term" value="C:cytoplasm"/>
    <property type="evidence" value="ECO:0007669"/>
    <property type="project" value="UniProtKB-SubCell"/>
</dbReference>
<dbReference type="GO" id="GO:0005524">
    <property type="term" value="F:ATP binding"/>
    <property type="evidence" value="ECO:0007669"/>
    <property type="project" value="UniProtKB-KW"/>
</dbReference>
<dbReference type="GO" id="GO:0000049">
    <property type="term" value="F:tRNA binding"/>
    <property type="evidence" value="ECO:0007669"/>
    <property type="project" value="UniProtKB-KW"/>
</dbReference>
<dbReference type="GO" id="GO:0103016">
    <property type="term" value="F:tRNA-uridine 2-sulfurtransferase activity"/>
    <property type="evidence" value="ECO:0007669"/>
    <property type="project" value="UniProtKB-EC"/>
</dbReference>
<dbReference type="GO" id="GO:0002143">
    <property type="term" value="P:tRNA wobble position uridine thiolation"/>
    <property type="evidence" value="ECO:0007669"/>
    <property type="project" value="TreeGrafter"/>
</dbReference>
<dbReference type="CDD" id="cd01998">
    <property type="entry name" value="MnmA_TRMU-like"/>
    <property type="match status" value="1"/>
</dbReference>
<dbReference type="FunFam" id="2.30.30.280:FF:000001">
    <property type="entry name" value="tRNA-specific 2-thiouridylase MnmA"/>
    <property type="match status" value="1"/>
</dbReference>
<dbReference type="FunFam" id="3.40.50.620:FF:000115">
    <property type="entry name" value="tRNA-specific 2-thiouridylase MnmA"/>
    <property type="match status" value="1"/>
</dbReference>
<dbReference type="Gene3D" id="2.30.30.280">
    <property type="entry name" value="Adenine nucleotide alpha hydrolases-like domains"/>
    <property type="match status" value="1"/>
</dbReference>
<dbReference type="Gene3D" id="3.40.50.620">
    <property type="entry name" value="HUPs"/>
    <property type="match status" value="1"/>
</dbReference>
<dbReference type="Gene3D" id="2.40.30.10">
    <property type="entry name" value="Translation factors"/>
    <property type="match status" value="1"/>
</dbReference>
<dbReference type="HAMAP" id="MF_00144">
    <property type="entry name" value="tRNA_thiouridyl_MnmA"/>
    <property type="match status" value="1"/>
</dbReference>
<dbReference type="InterPro" id="IPR004506">
    <property type="entry name" value="MnmA-like"/>
</dbReference>
<dbReference type="InterPro" id="IPR046885">
    <property type="entry name" value="MnmA-like_C"/>
</dbReference>
<dbReference type="InterPro" id="IPR046884">
    <property type="entry name" value="MnmA-like_central"/>
</dbReference>
<dbReference type="InterPro" id="IPR023382">
    <property type="entry name" value="MnmA-like_central_sf"/>
</dbReference>
<dbReference type="InterPro" id="IPR014729">
    <property type="entry name" value="Rossmann-like_a/b/a_fold"/>
</dbReference>
<dbReference type="NCBIfam" id="NF001138">
    <property type="entry name" value="PRK00143.1"/>
    <property type="match status" value="1"/>
</dbReference>
<dbReference type="NCBIfam" id="TIGR00420">
    <property type="entry name" value="trmU"/>
    <property type="match status" value="1"/>
</dbReference>
<dbReference type="PANTHER" id="PTHR11933:SF5">
    <property type="entry name" value="MITOCHONDRIAL TRNA-SPECIFIC 2-THIOURIDYLASE 1"/>
    <property type="match status" value="1"/>
</dbReference>
<dbReference type="PANTHER" id="PTHR11933">
    <property type="entry name" value="TRNA 5-METHYLAMINOMETHYL-2-THIOURIDYLATE -METHYLTRANSFERASE"/>
    <property type="match status" value="1"/>
</dbReference>
<dbReference type="Pfam" id="PF03054">
    <property type="entry name" value="tRNA_Me_trans"/>
    <property type="match status" value="1"/>
</dbReference>
<dbReference type="Pfam" id="PF20258">
    <property type="entry name" value="tRNA_Me_trans_C"/>
    <property type="match status" value="1"/>
</dbReference>
<dbReference type="Pfam" id="PF20259">
    <property type="entry name" value="tRNA_Me_trans_M"/>
    <property type="match status" value="1"/>
</dbReference>
<dbReference type="SUPFAM" id="SSF52402">
    <property type="entry name" value="Adenine nucleotide alpha hydrolases-like"/>
    <property type="match status" value="1"/>
</dbReference>
<comment type="function">
    <text evidence="1">Catalyzes the 2-thiolation of uridine at the wobble position (U34) of tRNA, leading to the formation of s(2)U34.</text>
</comment>
<comment type="catalytic activity">
    <reaction evidence="1">
        <text>S-sulfanyl-L-cysteinyl-[protein] + uridine(34) in tRNA + AH2 + ATP = 2-thiouridine(34) in tRNA + L-cysteinyl-[protein] + A + AMP + diphosphate + H(+)</text>
        <dbReference type="Rhea" id="RHEA:47032"/>
        <dbReference type="Rhea" id="RHEA-COMP:10131"/>
        <dbReference type="Rhea" id="RHEA-COMP:11726"/>
        <dbReference type="Rhea" id="RHEA-COMP:11727"/>
        <dbReference type="Rhea" id="RHEA-COMP:11728"/>
        <dbReference type="ChEBI" id="CHEBI:13193"/>
        <dbReference type="ChEBI" id="CHEBI:15378"/>
        <dbReference type="ChEBI" id="CHEBI:17499"/>
        <dbReference type="ChEBI" id="CHEBI:29950"/>
        <dbReference type="ChEBI" id="CHEBI:30616"/>
        <dbReference type="ChEBI" id="CHEBI:33019"/>
        <dbReference type="ChEBI" id="CHEBI:61963"/>
        <dbReference type="ChEBI" id="CHEBI:65315"/>
        <dbReference type="ChEBI" id="CHEBI:87170"/>
        <dbReference type="ChEBI" id="CHEBI:456215"/>
        <dbReference type="EC" id="2.8.1.13"/>
    </reaction>
</comment>
<comment type="subcellular location">
    <subcellularLocation>
        <location evidence="1">Cytoplasm</location>
    </subcellularLocation>
</comment>
<comment type="similarity">
    <text evidence="1">Belongs to the MnmA/TRMU family.</text>
</comment>
<comment type="sequence caution" evidence="2">
    <conflict type="erroneous initiation">
        <sequence resource="EMBL-CDS" id="ABY32466"/>
    </conflict>
</comment>
<sequence>MNSLDLPKPPHETRVVVAMSGGVDSSVVAGLLKREGYDVVGVTLQLYDHGAATHRKGACCAGRDIHDARAVAETLGIPHYVLDYEDRFRESVIDRFAESYLSGETPIPCVECNRSVKFRDLLGLARDLGAEALATGHYVASRARPEGGRALYRALDPARDQSYFLYATTPEQLAYLRFPLGERPKDETRALARELGLAVADKADSQDICFVPQGGYADVIAKLRPEATRPGEIVDLDGRRLGEHEGIIHYTVGQRRGLKLSAGEPLYVVRLEPETARVVVGPRAALATRRIRLTDLNWLGDGAPEDIAERPVAVRVRSTREPRPARLSWNAAEACAEVELLVPEDGVSPGQACVIYADDDPRAQVLGGGTIRRIGALQAGAAEAA</sequence>
<feature type="chain" id="PRO_0000349696" description="tRNA-specific 2-thiouridylase MnmA">
    <location>
        <begin position="1"/>
        <end position="385"/>
    </location>
</feature>
<feature type="region of interest" description="Interaction with tRNA" evidence="1">
    <location>
        <begin position="159"/>
        <end position="161"/>
    </location>
</feature>
<feature type="active site" description="Nucleophile" evidence="1">
    <location>
        <position position="112"/>
    </location>
</feature>
<feature type="active site" description="Cysteine persulfide intermediate" evidence="1">
    <location>
        <position position="209"/>
    </location>
</feature>
<feature type="binding site" evidence="1">
    <location>
        <begin position="18"/>
        <end position="25"/>
    </location>
    <ligand>
        <name>ATP</name>
        <dbReference type="ChEBI" id="CHEBI:30616"/>
    </ligand>
</feature>
<feature type="binding site" evidence="1">
    <location>
        <position position="44"/>
    </location>
    <ligand>
        <name>ATP</name>
        <dbReference type="ChEBI" id="CHEBI:30616"/>
    </ligand>
</feature>
<feature type="binding site" evidence="1">
    <location>
        <position position="136"/>
    </location>
    <ligand>
        <name>ATP</name>
        <dbReference type="ChEBI" id="CHEBI:30616"/>
    </ligand>
</feature>
<feature type="site" description="Interaction with tRNA" evidence="1">
    <location>
        <position position="137"/>
    </location>
</feature>
<feature type="site" description="Interaction with tRNA" evidence="1">
    <location>
        <position position="351"/>
    </location>
</feature>
<feature type="disulfide bond" description="Alternate" evidence="1">
    <location>
        <begin position="112"/>
        <end position="209"/>
    </location>
</feature>
<name>MNMA_METEP</name>
<proteinExistence type="inferred from homology"/>
<protein>
    <recommendedName>
        <fullName evidence="1">tRNA-specific 2-thiouridylase MnmA</fullName>
        <ecNumber evidence="1">2.8.1.13</ecNumber>
    </recommendedName>
</protein>
<evidence type="ECO:0000255" key="1">
    <source>
        <dbReference type="HAMAP-Rule" id="MF_00144"/>
    </source>
</evidence>
<evidence type="ECO:0000305" key="2"/>